<sequence length="110" mass="12023">MSMTDLLNAEDIKKAVGAFSAIDSFDHKKFFQMVGLKKKSADDVKKVFHILDKDKSGFIEEDELGFILKGFSPDARDLSAKETKTLMAAGDKDGDGKIGVDEFSTLVAES</sequence>
<keyword id="KW-0007">Acetylation</keyword>
<keyword id="KW-0106">Calcium</keyword>
<keyword id="KW-0903">Direct protein sequencing</keyword>
<keyword id="KW-0479">Metal-binding</keyword>
<keyword id="KW-0514">Muscle protein</keyword>
<keyword id="KW-0597">Phosphoprotein</keyword>
<keyword id="KW-0677">Repeat</keyword>
<organism>
    <name type="scientific">Macaca fuscata fuscata</name>
    <name type="common">Japanese macaque</name>
    <dbReference type="NCBI Taxonomy" id="9543"/>
    <lineage>
        <taxon>Eukaryota</taxon>
        <taxon>Metazoa</taxon>
        <taxon>Chordata</taxon>
        <taxon>Craniata</taxon>
        <taxon>Vertebrata</taxon>
        <taxon>Euteleostomi</taxon>
        <taxon>Mammalia</taxon>
        <taxon>Eutheria</taxon>
        <taxon>Euarchontoglires</taxon>
        <taxon>Primates</taxon>
        <taxon>Haplorrhini</taxon>
        <taxon>Catarrhini</taxon>
        <taxon>Cercopithecidae</taxon>
        <taxon>Cercopithecinae</taxon>
        <taxon>Macaca</taxon>
    </lineage>
</organism>
<proteinExistence type="evidence at protein level"/>
<gene>
    <name type="primary">PVALB</name>
</gene>
<reference key="1">
    <citation type="journal article" date="1992" name="Biochim. Biophys. Acta">
        <title>Protein sequence determination by ESI-MS and LSI-MS tandem mass spectrometry: parvalbumin primary structures from cat, gerbil and monkey skeletal muscle.</title>
        <authorList>
            <person name="Hauer C.R."/>
            <person name="Staudenmann W."/>
            <person name="Kuster T."/>
            <person name="Neuheiser F."/>
            <person name="Hughes G.J."/>
            <person name="Seto-Ohshima A."/>
            <person name="Tanokura M."/>
            <person name="Heizmann C.W."/>
        </authorList>
    </citation>
    <scope>PROTEIN SEQUENCE OF 2-110</scope>
    <source>
        <tissue>Skeletal muscle</tissue>
    </source>
</reference>
<evidence type="ECO:0000250" key="1">
    <source>
        <dbReference type="UniProtKB" id="P02624"/>
    </source>
</evidence>
<evidence type="ECO:0000250" key="2">
    <source>
        <dbReference type="UniProtKB" id="P02625"/>
    </source>
</evidence>
<evidence type="ECO:0000250" key="3">
    <source>
        <dbReference type="UniProtKB" id="P80079"/>
    </source>
</evidence>
<evidence type="ECO:0000255" key="4">
    <source>
        <dbReference type="PROSITE-ProRule" id="PRU00448"/>
    </source>
</evidence>
<evidence type="ECO:0000269" key="5">
    <source>
    </source>
</evidence>
<evidence type="ECO:0000305" key="6"/>
<dbReference type="PIR" id="S27210">
    <property type="entry name" value="S27210"/>
</dbReference>
<dbReference type="BMRB" id="P80050"/>
<dbReference type="SMR" id="P80050"/>
<dbReference type="GO" id="GO:0005737">
    <property type="term" value="C:cytoplasm"/>
    <property type="evidence" value="ECO:0007669"/>
    <property type="project" value="TreeGrafter"/>
</dbReference>
<dbReference type="GO" id="GO:0005509">
    <property type="term" value="F:calcium ion binding"/>
    <property type="evidence" value="ECO:0007669"/>
    <property type="project" value="InterPro"/>
</dbReference>
<dbReference type="CDD" id="cd16254">
    <property type="entry name" value="EFh_parvalbumin_alpha"/>
    <property type="match status" value="1"/>
</dbReference>
<dbReference type="FunFam" id="1.10.238.10:FF:000060">
    <property type="entry name" value="Parvalbumin, thymic"/>
    <property type="match status" value="1"/>
</dbReference>
<dbReference type="Gene3D" id="1.10.238.10">
    <property type="entry name" value="EF-hand"/>
    <property type="match status" value="1"/>
</dbReference>
<dbReference type="InterPro" id="IPR011992">
    <property type="entry name" value="EF-hand-dom_pair"/>
</dbReference>
<dbReference type="InterPro" id="IPR018247">
    <property type="entry name" value="EF_Hand_1_Ca_BS"/>
</dbReference>
<dbReference type="InterPro" id="IPR002048">
    <property type="entry name" value="EF_hand_dom"/>
</dbReference>
<dbReference type="InterPro" id="IPR008080">
    <property type="entry name" value="Parvalbumin"/>
</dbReference>
<dbReference type="PANTHER" id="PTHR11653">
    <property type="entry name" value="PARVALBUMIN ALPHA"/>
    <property type="match status" value="1"/>
</dbReference>
<dbReference type="PANTHER" id="PTHR11653:SF2">
    <property type="entry name" value="PARVALBUMIN ALPHA"/>
    <property type="match status" value="1"/>
</dbReference>
<dbReference type="Pfam" id="PF13499">
    <property type="entry name" value="EF-hand_7"/>
    <property type="match status" value="1"/>
</dbReference>
<dbReference type="PRINTS" id="PR01697">
    <property type="entry name" value="PARVALBUMIN"/>
</dbReference>
<dbReference type="SMART" id="SM00054">
    <property type="entry name" value="EFh"/>
    <property type="match status" value="2"/>
</dbReference>
<dbReference type="SUPFAM" id="SSF47473">
    <property type="entry name" value="EF-hand"/>
    <property type="match status" value="1"/>
</dbReference>
<dbReference type="PROSITE" id="PS00018">
    <property type="entry name" value="EF_HAND_1"/>
    <property type="match status" value="2"/>
</dbReference>
<dbReference type="PROSITE" id="PS50222">
    <property type="entry name" value="EF_HAND_2"/>
    <property type="match status" value="2"/>
</dbReference>
<protein>
    <recommendedName>
        <fullName>Parvalbumin alpha</fullName>
    </recommendedName>
    <alternativeName>
        <fullName evidence="6">Alpha-parvalbumin</fullName>
        <shortName evidence="6">Alpha-PV</shortName>
    </alternativeName>
    <alternativeName>
        <fullName>Parvalbumin, muscle</fullName>
    </alternativeName>
</protein>
<comment type="function">
    <text evidence="1 2">In muscle, parvalbumin is thought to be involved in relaxation after contraction (By similarity). It binds two calcium ions (By similarity).</text>
</comment>
<comment type="domain">
    <text evidence="2">AB domain, comprising of helices A and B, is involved in structural stabilization, protecting the hydrophobic core of the protein. It is required for high-affinity binding of Ca(2+) and for Mg(2+)-binding.</text>
</comment>
<comment type="similarity">
    <text evidence="6">Belongs to the parvalbumin family.</text>
</comment>
<feature type="initiator methionine" description="Removed" evidence="3 5">
    <location>
        <position position="1"/>
    </location>
</feature>
<feature type="chain" id="PRO_0000073589" description="Parvalbumin alpha">
    <location>
        <begin position="2"/>
        <end position="110"/>
    </location>
</feature>
<feature type="domain" description="EF-hand 1" evidence="4">
    <location>
        <begin position="39"/>
        <end position="74"/>
    </location>
</feature>
<feature type="domain" description="EF-hand 2" evidence="4">
    <location>
        <begin position="78"/>
        <end position="110"/>
    </location>
</feature>
<feature type="binding site" evidence="4">
    <location>
        <position position="52"/>
    </location>
    <ligand>
        <name>Ca(2+)</name>
        <dbReference type="ChEBI" id="CHEBI:29108"/>
        <label>1</label>
    </ligand>
</feature>
<feature type="binding site" evidence="4">
    <location>
        <position position="54"/>
    </location>
    <ligand>
        <name>Ca(2+)</name>
        <dbReference type="ChEBI" id="CHEBI:29108"/>
        <label>1</label>
    </ligand>
</feature>
<feature type="binding site" evidence="4">
    <location>
        <position position="56"/>
    </location>
    <ligand>
        <name>Ca(2+)</name>
        <dbReference type="ChEBI" id="CHEBI:29108"/>
        <label>1</label>
    </ligand>
</feature>
<feature type="binding site" evidence="2">
    <location>
        <position position="58"/>
    </location>
    <ligand>
        <name>Ca(2+)</name>
        <dbReference type="ChEBI" id="CHEBI:29108"/>
        <label>1</label>
    </ligand>
</feature>
<feature type="binding site" evidence="2">
    <location>
        <position position="60"/>
    </location>
    <ligand>
        <name>Ca(2+)</name>
        <dbReference type="ChEBI" id="CHEBI:29108"/>
        <label>1</label>
    </ligand>
</feature>
<feature type="binding site" evidence="4">
    <location>
        <position position="63"/>
    </location>
    <ligand>
        <name>Ca(2+)</name>
        <dbReference type="ChEBI" id="CHEBI:29108"/>
        <label>1</label>
    </ligand>
</feature>
<feature type="binding site" evidence="4">
    <location>
        <position position="91"/>
    </location>
    <ligand>
        <name>Ca(2+)</name>
        <dbReference type="ChEBI" id="CHEBI:29108"/>
        <label>2</label>
    </ligand>
</feature>
<feature type="binding site" evidence="4">
    <location>
        <position position="93"/>
    </location>
    <ligand>
        <name>Ca(2+)</name>
        <dbReference type="ChEBI" id="CHEBI:29108"/>
        <label>2</label>
    </ligand>
</feature>
<feature type="binding site" evidence="4">
    <location>
        <position position="95"/>
    </location>
    <ligand>
        <name>Ca(2+)</name>
        <dbReference type="ChEBI" id="CHEBI:29108"/>
        <label>2</label>
    </ligand>
</feature>
<feature type="binding site" evidence="4">
    <location>
        <position position="97"/>
    </location>
    <ligand>
        <name>Ca(2+)</name>
        <dbReference type="ChEBI" id="CHEBI:29108"/>
        <label>2</label>
    </ligand>
</feature>
<feature type="binding site" evidence="4">
    <location>
        <position position="102"/>
    </location>
    <ligand>
        <name>Ca(2+)</name>
        <dbReference type="ChEBI" id="CHEBI:29108"/>
        <label>2</label>
    </ligand>
</feature>
<feature type="modified residue" description="N-acetylserine" evidence="3">
    <location>
        <position position="2"/>
    </location>
</feature>
<feature type="modified residue" description="Phosphoserine" evidence="2">
    <location>
        <position position="2"/>
    </location>
</feature>
<feature type="modified residue" description="Phosphoserine" evidence="2">
    <location>
        <position position="24"/>
    </location>
</feature>
<accession>P80050</accession>
<name>PRVA_MACFU</name>